<proteinExistence type="inferred from homology"/>
<accession>B5R571</accession>
<keyword id="KW-0963">Cytoplasm</keyword>
<keyword id="KW-0269">Exonuclease</keyword>
<keyword id="KW-0378">Hydrolase</keyword>
<keyword id="KW-0540">Nuclease</keyword>
<gene>
    <name evidence="1" type="primary">xseA</name>
    <name type="ordered locus">SEN2492</name>
</gene>
<feature type="chain" id="PRO_1000122082" description="Exodeoxyribonuclease 7 large subunit">
    <location>
        <begin position="1"/>
        <end position="449"/>
    </location>
</feature>
<protein>
    <recommendedName>
        <fullName evidence="1">Exodeoxyribonuclease 7 large subunit</fullName>
        <ecNumber evidence="1">3.1.11.6</ecNumber>
    </recommendedName>
    <alternativeName>
        <fullName evidence="1">Exodeoxyribonuclease VII large subunit</fullName>
        <shortName evidence="1">Exonuclease VII large subunit</shortName>
    </alternativeName>
</protein>
<name>EX7L_SALEP</name>
<dbReference type="EC" id="3.1.11.6" evidence="1"/>
<dbReference type="EMBL" id="AM933172">
    <property type="protein sequence ID" value="CAR34075.1"/>
    <property type="molecule type" value="Genomic_DNA"/>
</dbReference>
<dbReference type="RefSeq" id="WP_000953167.1">
    <property type="nucleotide sequence ID" value="NC_011294.1"/>
</dbReference>
<dbReference type="SMR" id="B5R571"/>
<dbReference type="KEGG" id="set:SEN2492"/>
<dbReference type="HOGENOM" id="CLU_023625_3_1_6"/>
<dbReference type="Proteomes" id="UP000000613">
    <property type="component" value="Chromosome"/>
</dbReference>
<dbReference type="GO" id="GO:0005737">
    <property type="term" value="C:cytoplasm"/>
    <property type="evidence" value="ECO:0007669"/>
    <property type="project" value="UniProtKB-SubCell"/>
</dbReference>
<dbReference type="GO" id="GO:0009318">
    <property type="term" value="C:exodeoxyribonuclease VII complex"/>
    <property type="evidence" value="ECO:0007669"/>
    <property type="project" value="InterPro"/>
</dbReference>
<dbReference type="GO" id="GO:0008855">
    <property type="term" value="F:exodeoxyribonuclease VII activity"/>
    <property type="evidence" value="ECO:0007669"/>
    <property type="project" value="UniProtKB-UniRule"/>
</dbReference>
<dbReference type="GO" id="GO:0003676">
    <property type="term" value="F:nucleic acid binding"/>
    <property type="evidence" value="ECO:0007669"/>
    <property type="project" value="InterPro"/>
</dbReference>
<dbReference type="GO" id="GO:0006308">
    <property type="term" value="P:DNA catabolic process"/>
    <property type="evidence" value="ECO:0007669"/>
    <property type="project" value="UniProtKB-UniRule"/>
</dbReference>
<dbReference type="CDD" id="cd04489">
    <property type="entry name" value="ExoVII_LU_OBF"/>
    <property type="match status" value="1"/>
</dbReference>
<dbReference type="HAMAP" id="MF_00378">
    <property type="entry name" value="Exonuc_7_L"/>
    <property type="match status" value="1"/>
</dbReference>
<dbReference type="InterPro" id="IPR003753">
    <property type="entry name" value="Exonuc_VII_L"/>
</dbReference>
<dbReference type="InterPro" id="IPR020579">
    <property type="entry name" value="Exonuc_VII_lsu_C"/>
</dbReference>
<dbReference type="InterPro" id="IPR025824">
    <property type="entry name" value="OB-fold_nuc-bd_dom"/>
</dbReference>
<dbReference type="NCBIfam" id="TIGR00237">
    <property type="entry name" value="xseA"/>
    <property type="match status" value="1"/>
</dbReference>
<dbReference type="PANTHER" id="PTHR30008">
    <property type="entry name" value="EXODEOXYRIBONUCLEASE 7 LARGE SUBUNIT"/>
    <property type="match status" value="1"/>
</dbReference>
<dbReference type="PANTHER" id="PTHR30008:SF0">
    <property type="entry name" value="EXODEOXYRIBONUCLEASE 7 LARGE SUBUNIT"/>
    <property type="match status" value="1"/>
</dbReference>
<dbReference type="Pfam" id="PF02601">
    <property type="entry name" value="Exonuc_VII_L"/>
    <property type="match status" value="1"/>
</dbReference>
<dbReference type="Pfam" id="PF13742">
    <property type="entry name" value="tRNA_anti_2"/>
    <property type="match status" value="1"/>
</dbReference>
<organism>
    <name type="scientific">Salmonella enteritidis PT4 (strain P125109)</name>
    <dbReference type="NCBI Taxonomy" id="550537"/>
    <lineage>
        <taxon>Bacteria</taxon>
        <taxon>Pseudomonadati</taxon>
        <taxon>Pseudomonadota</taxon>
        <taxon>Gammaproteobacteria</taxon>
        <taxon>Enterobacterales</taxon>
        <taxon>Enterobacteriaceae</taxon>
        <taxon>Salmonella</taxon>
    </lineage>
</organism>
<evidence type="ECO:0000255" key="1">
    <source>
        <dbReference type="HAMAP-Rule" id="MF_00378"/>
    </source>
</evidence>
<reference key="1">
    <citation type="journal article" date="2008" name="Genome Res.">
        <title>Comparative genome analysis of Salmonella enteritidis PT4 and Salmonella gallinarum 287/91 provides insights into evolutionary and host adaptation pathways.</title>
        <authorList>
            <person name="Thomson N.R."/>
            <person name="Clayton D.J."/>
            <person name="Windhorst D."/>
            <person name="Vernikos G."/>
            <person name="Davidson S."/>
            <person name="Churcher C."/>
            <person name="Quail M.A."/>
            <person name="Stevens M."/>
            <person name="Jones M.A."/>
            <person name="Watson M."/>
            <person name="Barron A."/>
            <person name="Layton A."/>
            <person name="Pickard D."/>
            <person name="Kingsley R.A."/>
            <person name="Bignell A."/>
            <person name="Clark L."/>
            <person name="Harris B."/>
            <person name="Ormond D."/>
            <person name="Abdellah Z."/>
            <person name="Brooks K."/>
            <person name="Cherevach I."/>
            <person name="Chillingworth T."/>
            <person name="Woodward J."/>
            <person name="Norberczak H."/>
            <person name="Lord A."/>
            <person name="Arrowsmith C."/>
            <person name="Jagels K."/>
            <person name="Moule S."/>
            <person name="Mungall K."/>
            <person name="Saunders M."/>
            <person name="Whitehead S."/>
            <person name="Chabalgoity J.A."/>
            <person name="Maskell D."/>
            <person name="Humphreys T."/>
            <person name="Roberts M."/>
            <person name="Barrow P.A."/>
            <person name="Dougan G."/>
            <person name="Parkhill J."/>
        </authorList>
    </citation>
    <scope>NUCLEOTIDE SEQUENCE [LARGE SCALE GENOMIC DNA]</scope>
    <source>
        <strain>P125109</strain>
    </source>
</reference>
<sequence length="449" mass="50667">MLSSQTSSIFTVSRLNQTVRLLLEQEMGQVWISGEISNFTQPASGHWYFTLKDDTAQVRCAMFRNSNRRVTFRPQHGQQVLVRANITLYEPRGDYQIIAESMQPAGEGLLQQKYEQLKAKLQAEGLFDQQHKQPLPSPAHCVGVITSKTGAALHDILHVLKRRDPSLPVIIYPTAVQGDDAPGQIVRAIELANARGECDVLIVGRGGGSLEDLWSFNDERVARAIFASRIPVVSAVGHETDVTIADFVADLRAPTPSAAAEIVSRNQQELLRQIQSAQQRLGMAMDYYLANRSRRFTQIFHRLQQQHPQLRLARQQTALERLRQRMGFALEARIKQANQRQQRVSQRLSQQNPQPRIHRAQSRIQQLEYRLTENIRSRLSEQRERFGNAVTHLEAVSPLATLARGYTVSTTTDGKVLKKIKQVKAGDIMTTRLEDGWLESEVKSVTPGT</sequence>
<comment type="function">
    <text evidence="1">Bidirectionally degrades single-stranded DNA into large acid-insoluble oligonucleotides, which are then degraded further into small acid-soluble oligonucleotides.</text>
</comment>
<comment type="catalytic activity">
    <reaction evidence="1">
        <text>Exonucleolytic cleavage in either 5'- to 3'- or 3'- to 5'-direction to yield nucleoside 5'-phosphates.</text>
        <dbReference type="EC" id="3.1.11.6"/>
    </reaction>
</comment>
<comment type="subunit">
    <text evidence="1">Heterooligomer composed of large and small subunits.</text>
</comment>
<comment type="subcellular location">
    <subcellularLocation>
        <location evidence="1">Cytoplasm</location>
    </subcellularLocation>
</comment>
<comment type="similarity">
    <text evidence="1">Belongs to the XseA family.</text>
</comment>